<proteinExistence type="inferred from homology"/>
<feature type="chain" id="PRO_0000383157" description="G-protein coupled receptor 183-B">
    <location>
        <begin position="1"/>
        <end position="366"/>
    </location>
</feature>
<feature type="topological domain" description="Extracellular" evidence="2">
    <location>
        <begin position="1"/>
        <end position="24"/>
    </location>
</feature>
<feature type="transmembrane region" description="Helical; Name=1" evidence="2">
    <location>
        <begin position="25"/>
        <end position="50"/>
    </location>
</feature>
<feature type="topological domain" description="Cytoplasmic" evidence="2">
    <location>
        <begin position="51"/>
        <end position="70"/>
    </location>
</feature>
<feature type="transmembrane region" description="Helical; Name=2" evidence="2">
    <location>
        <begin position="71"/>
        <end position="88"/>
    </location>
</feature>
<feature type="topological domain" description="Extracellular" evidence="2">
    <location>
        <begin position="89"/>
        <end position="98"/>
    </location>
</feature>
<feature type="transmembrane region" description="Helical; Name=3" evidence="2">
    <location>
        <begin position="99"/>
        <end position="120"/>
    </location>
</feature>
<feature type="topological domain" description="Cytoplasmic" evidence="2">
    <location>
        <begin position="121"/>
        <end position="142"/>
    </location>
</feature>
<feature type="transmembrane region" description="Helical; Name=4" evidence="2">
    <location>
        <begin position="143"/>
        <end position="161"/>
    </location>
</feature>
<feature type="topological domain" description="Extracellular" evidence="2">
    <location>
        <begin position="162"/>
        <end position="187"/>
    </location>
</feature>
<feature type="transmembrane region" description="Helical; Name=5" evidence="2">
    <location>
        <begin position="188"/>
        <end position="210"/>
    </location>
</feature>
<feature type="topological domain" description="Cytoplasmic" evidence="2">
    <location>
        <begin position="211"/>
        <end position="236"/>
    </location>
</feature>
<feature type="transmembrane region" description="Helical; Name=6" evidence="2">
    <location>
        <begin position="237"/>
        <end position="260"/>
    </location>
</feature>
<feature type="topological domain" description="Extracellular" evidence="2">
    <location>
        <begin position="261"/>
        <end position="280"/>
    </location>
</feature>
<feature type="transmembrane region" description="Helical; Name=7" evidence="2">
    <location>
        <begin position="281"/>
        <end position="305"/>
    </location>
</feature>
<feature type="topological domain" description="Cytoplasmic" evidence="2">
    <location>
        <begin position="306"/>
        <end position="366"/>
    </location>
</feature>
<feature type="glycosylation site" description="N-linked (GlcNAc...) asparagine" evidence="2">
    <location>
        <position position="9"/>
    </location>
</feature>
<feature type="disulfide bond" evidence="3">
    <location>
        <begin position="97"/>
        <end position="175"/>
    </location>
</feature>
<name>GP83B_DANRE</name>
<organism>
    <name type="scientific">Danio rerio</name>
    <name type="common">Zebrafish</name>
    <name type="synonym">Brachydanio rerio</name>
    <dbReference type="NCBI Taxonomy" id="7955"/>
    <lineage>
        <taxon>Eukaryota</taxon>
        <taxon>Metazoa</taxon>
        <taxon>Chordata</taxon>
        <taxon>Craniata</taxon>
        <taxon>Vertebrata</taxon>
        <taxon>Euteleostomi</taxon>
        <taxon>Actinopterygii</taxon>
        <taxon>Neopterygii</taxon>
        <taxon>Teleostei</taxon>
        <taxon>Ostariophysi</taxon>
        <taxon>Cypriniformes</taxon>
        <taxon>Danionidae</taxon>
        <taxon>Danioninae</taxon>
        <taxon>Danio</taxon>
    </lineage>
</organism>
<evidence type="ECO:0000250" key="1"/>
<evidence type="ECO:0000255" key="2"/>
<evidence type="ECO:0000255" key="3">
    <source>
        <dbReference type="PROSITE-ProRule" id="PRU00521"/>
    </source>
</evidence>
<evidence type="ECO:0000305" key="4"/>
<keyword id="KW-1064">Adaptive immunity</keyword>
<keyword id="KW-1003">Cell membrane</keyword>
<keyword id="KW-1015">Disulfide bond</keyword>
<keyword id="KW-0297">G-protein coupled receptor</keyword>
<keyword id="KW-0325">Glycoprotein</keyword>
<keyword id="KW-0391">Immunity</keyword>
<keyword id="KW-0472">Membrane</keyword>
<keyword id="KW-0675">Receptor</keyword>
<keyword id="KW-1185">Reference proteome</keyword>
<keyword id="KW-0807">Transducer</keyword>
<keyword id="KW-0812">Transmembrane</keyword>
<keyword id="KW-1133">Transmembrane helix</keyword>
<gene>
    <name type="primary">gpr183b</name>
    <name type="ORF">si:dkey-22o12.5</name>
</gene>
<protein>
    <recommendedName>
        <fullName>G-protein coupled receptor 183-B</fullName>
    </recommendedName>
</protein>
<comment type="function">
    <text evidence="1">Probable receptor for oxysterols that plays a central role during humoral immunity. Promotes activated B-cell localization in the outer follicle and interfollicular regions (By similarity).</text>
</comment>
<comment type="subcellular location">
    <subcellularLocation>
        <location evidence="4">Cell membrane</location>
        <topology evidence="4">Multi-pass membrane protein</topology>
    </subcellularLocation>
</comment>
<comment type="similarity">
    <text evidence="3">Belongs to the G-protein coupled receptor 1 family.</text>
</comment>
<reference key="1">
    <citation type="journal article" date="2013" name="Nature">
        <title>The zebrafish reference genome sequence and its relationship to the human genome.</title>
        <authorList>
            <person name="Howe K."/>
            <person name="Clark M.D."/>
            <person name="Torroja C.F."/>
            <person name="Torrance J."/>
            <person name="Berthelot C."/>
            <person name="Muffato M."/>
            <person name="Collins J.E."/>
            <person name="Humphray S."/>
            <person name="McLaren K."/>
            <person name="Matthews L."/>
            <person name="McLaren S."/>
            <person name="Sealy I."/>
            <person name="Caccamo M."/>
            <person name="Churcher C."/>
            <person name="Scott C."/>
            <person name="Barrett J.C."/>
            <person name="Koch R."/>
            <person name="Rauch G.J."/>
            <person name="White S."/>
            <person name="Chow W."/>
            <person name="Kilian B."/>
            <person name="Quintais L.T."/>
            <person name="Guerra-Assuncao J.A."/>
            <person name="Zhou Y."/>
            <person name="Gu Y."/>
            <person name="Yen J."/>
            <person name="Vogel J.H."/>
            <person name="Eyre T."/>
            <person name="Redmond S."/>
            <person name="Banerjee R."/>
            <person name="Chi J."/>
            <person name="Fu B."/>
            <person name="Langley E."/>
            <person name="Maguire S.F."/>
            <person name="Laird G.K."/>
            <person name="Lloyd D."/>
            <person name="Kenyon E."/>
            <person name="Donaldson S."/>
            <person name="Sehra H."/>
            <person name="Almeida-King J."/>
            <person name="Loveland J."/>
            <person name="Trevanion S."/>
            <person name="Jones M."/>
            <person name="Quail M."/>
            <person name="Willey D."/>
            <person name="Hunt A."/>
            <person name="Burton J."/>
            <person name="Sims S."/>
            <person name="McLay K."/>
            <person name="Plumb B."/>
            <person name="Davis J."/>
            <person name="Clee C."/>
            <person name="Oliver K."/>
            <person name="Clark R."/>
            <person name="Riddle C."/>
            <person name="Elliot D."/>
            <person name="Threadgold G."/>
            <person name="Harden G."/>
            <person name="Ware D."/>
            <person name="Begum S."/>
            <person name="Mortimore B."/>
            <person name="Kerry G."/>
            <person name="Heath P."/>
            <person name="Phillimore B."/>
            <person name="Tracey A."/>
            <person name="Corby N."/>
            <person name="Dunn M."/>
            <person name="Johnson C."/>
            <person name="Wood J."/>
            <person name="Clark S."/>
            <person name="Pelan S."/>
            <person name="Griffiths G."/>
            <person name="Smith M."/>
            <person name="Glithero R."/>
            <person name="Howden P."/>
            <person name="Barker N."/>
            <person name="Lloyd C."/>
            <person name="Stevens C."/>
            <person name="Harley J."/>
            <person name="Holt K."/>
            <person name="Panagiotidis G."/>
            <person name="Lovell J."/>
            <person name="Beasley H."/>
            <person name="Henderson C."/>
            <person name="Gordon D."/>
            <person name="Auger K."/>
            <person name="Wright D."/>
            <person name="Collins J."/>
            <person name="Raisen C."/>
            <person name="Dyer L."/>
            <person name="Leung K."/>
            <person name="Robertson L."/>
            <person name="Ambridge K."/>
            <person name="Leongamornlert D."/>
            <person name="McGuire S."/>
            <person name="Gilderthorp R."/>
            <person name="Griffiths C."/>
            <person name="Manthravadi D."/>
            <person name="Nichol S."/>
            <person name="Barker G."/>
            <person name="Whitehead S."/>
            <person name="Kay M."/>
            <person name="Brown J."/>
            <person name="Murnane C."/>
            <person name="Gray E."/>
            <person name="Humphries M."/>
            <person name="Sycamore N."/>
            <person name="Barker D."/>
            <person name="Saunders D."/>
            <person name="Wallis J."/>
            <person name="Babbage A."/>
            <person name="Hammond S."/>
            <person name="Mashreghi-Mohammadi M."/>
            <person name="Barr L."/>
            <person name="Martin S."/>
            <person name="Wray P."/>
            <person name="Ellington A."/>
            <person name="Matthews N."/>
            <person name="Ellwood M."/>
            <person name="Woodmansey R."/>
            <person name="Clark G."/>
            <person name="Cooper J."/>
            <person name="Tromans A."/>
            <person name="Grafham D."/>
            <person name="Skuce C."/>
            <person name="Pandian R."/>
            <person name="Andrews R."/>
            <person name="Harrison E."/>
            <person name="Kimberley A."/>
            <person name="Garnett J."/>
            <person name="Fosker N."/>
            <person name="Hall R."/>
            <person name="Garner P."/>
            <person name="Kelly D."/>
            <person name="Bird C."/>
            <person name="Palmer S."/>
            <person name="Gehring I."/>
            <person name="Berger A."/>
            <person name="Dooley C.M."/>
            <person name="Ersan-Urun Z."/>
            <person name="Eser C."/>
            <person name="Geiger H."/>
            <person name="Geisler M."/>
            <person name="Karotki L."/>
            <person name="Kirn A."/>
            <person name="Konantz J."/>
            <person name="Konantz M."/>
            <person name="Oberlander M."/>
            <person name="Rudolph-Geiger S."/>
            <person name="Teucke M."/>
            <person name="Lanz C."/>
            <person name="Raddatz G."/>
            <person name="Osoegawa K."/>
            <person name="Zhu B."/>
            <person name="Rapp A."/>
            <person name="Widaa S."/>
            <person name="Langford C."/>
            <person name="Yang F."/>
            <person name="Schuster S.C."/>
            <person name="Carter N.P."/>
            <person name="Harrow J."/>
            <person name="Ning Z."/>
            <person name="Herrero J."/>
            <person name="Searle S.M."/>
            <person name="Enright A."/>
            <person name="Geisler R."/>
            <person name="Plasterk R.H."/>
            <person name="Lee C."/>
            <person name="Westerfield M."/>
            <person name="de Jong P.J."/>
            <person name="Zon L.I."/>
            <person name="Postlethwait J.H."/>
            <person name="Nusslein-Volhard C."/>
            <person name="Hubbard T.J."/>
            <person name="Roest Crollius H."/>
            <person name="Rogers J."/>
            <person name="Stemple D.L."/>
        </authorList>
    </citation>
    <scope>NUCLEOTIDE SEQUENCE [LARGE SCALE GENOMIC DNA]</scope>
    <source>
        <strain>Tuebingen</strain>
    </source>
</reference>
<dbReference type="EMBL" id="CR382370">
    <property type="protein sequence ID" value="CAQ13892.1"/>
    <property type="molecule type" value="Genomic_DNA"/>
</dbReference>
<dbReference type="RefSeq" id="NP_001124284.1">
    <property type="nucleotide sequence ID" value="NM_001130812.1"/>
</dbReference>
<dbReference type="SMR" id="B0UXR0"/>
<dbReference type="FunCoup" id="B0UXR0">
    <property type="interactions" value="69"/>
</dbReference>
<dbReference type="STRING" id="7955.ENSDARP00000099273"/>
<dbReference type="GlyCosmos" id="B0UXR0">
    <property type="glycosylation" value="1 site, No reported glycans"/>
</dbReference>
<dbReference type="PaxDb" id="7955-ENSDARP00000099273"/>
<dbReference type="Ensembl" id="ENSDART00000112778">
    <property type="protein sequence ID" value="ENSDARP00000099273"/>
    <property type="gene ID" value="ENSDARG00000074302"/>
</dbReference>
<dbReference type="GeneID" id="100150688"/>
<dbReference type="KEGG" id="dre:100150688"/>
<dbReference type="AGR" id="ZFIN:ZDB-GENE-081031-74"/>
<dbReference type="CTD" id="100150688"/>
<dbReference type="ZFIN" id="ZDB-GENE-081031-74">
    <property type="gene designation" value="gpr183b"/>
</dbReference>
<dbReference type="eggNOG" id="ENOG502QWD9">
    <property type="taxonomic scope" value="Eukaryota"/>
</dbReference>
<dbReference type="HOGENOM" id="CLU_009579_8_2_1"/>
<dbReference type="InParanoid" id="B0UXR0"/>
<dbReference type="OMA" id="FYINTYV"/>
<dbReference type="OrthoDB" id="10021141at2759"/>
<dbReference type="PhylomeDB" id="B0UXR0"/>
<dbReference type="TreeFam" id="TF350009"/>
<dbReference type="PRO" id="PR:B0UXR0"/>
<dbReference type="Proteomes" id="UP000000437">
    <property type="component" value="Alternate scaffold 1"/>
</dbReference>
<dbReference type="Proteomes" id="UP000000437">
    <property type="component" value="Chromosome 1"/>
</dbReference>
<dbReference type="Bgee" id="ENSDARG00000074302">
    <property type="expression patterns" value="Expressed in granulocyte and 5 other cell types or tissues"/>
</dbReference>
<dbReference type="GO" id="GO:0005886">
    <property type="term" value="C:plasma membrane"/>
    <property type="evidence" value="ECO:0007669"/>
    <property type="project" value="UniProtKB-SubCell"/>
</dbReference>
<dbReference type="GO" id="GO:0004930">
    <property type="term" value="F:G protein-coupled receptor activity"/>
    <property type="evidence" value="ECO:0000318"/>
    <property type="project" value="GO_Central"/>
</dbReference>
<dbReference type="GO" id="GO:0008142">
    <property type="term" value="F:oxysterol binding"/>
    <property type="evidence" value="ECO:0007669"/>
    <property type="project" value="InterPro"/>
</dbReference>
<dbReference type="GO" id="GO:0002250">
    <property type="term" value="P:adaptive immune response"/>
    <property type="evidence" value="ECO:0007669"/>
    <property type="project" value="UniProtKB-KW"/>
</dbReference>
<dbReference type="CDD" id="cd15159">
    <property type="entry name" value="7tmA_EBI2"/>
    <property type="match status" value="1"/>
</dbReference>
<dbReference type="FunFam" id="1.20.1070.10:FF:000017">
    <property type="entry name" value="lysophosphatidic acid receptor 4"/>
    <property type="match status" value="1"/>
</dbReference>
<dbReference type="Gene3D" id="1.20.1070.10">
    <property type="entry name" value="Rhodopsin 7-helix transmembrane proteins"/>
    <property type="match status" value="1"/>
</dbReference>
<dbReference type="InterPro" id="IPR047160">
    <property type="entry name" value="GP183-like"/>
</dbReference>
<dbReference type="InterPro" id="IPR000276">
    <property type="entry name" value="GPCR_Rhodpsn"/>
</dbReference>
<dbReference type="InterPro" id="IPR017452">
    <property type="entry name" value="GPCR_Rhodpsn_7TM"/>
</dbReference>
<dbReference type="PANTHER" id="PTHR24237">
    <property type="entry name" value="G-PROTEIN COUPLED RECEPTOR"/>
    <property type="match status" value="1"/>
</dbReference>
<dbReference type="PANTHER" id="PTHR24237:SF7">
    <property type="entry name" value="G-PROTEIN COUPLED RECEPTOR 183"/>
    <property type="match status" value="1"/>
</dbReference>
<dbReference type="Pfam" id="PF00001">
    <property type="entry name" value="7tm_1"/>
    <property type="match status" value="1"/>
</dbReference>
<dbReference type="PRINTS" id="PR00237">
    <property type="entry name" value="GPCRRHODOPSN"/>
</dbReference>
<dbReference type="PRINTS" id="PR01157">
    <property type="entry name" value="P2YPURNOCPTR"/>
</dbReference>
<dbReference type="SUPFAM" id="SSF81321">
    <property type="entry name" value="Family A G protein-coupled receptor-like"/>
    <property type="match status" value="1"/>
</dbReference>
<dbReference type="PROSITE" id="PS00237">
    <property type="entry name" value="G_PROTEIN_RECEP_F1_1"/>
    <property type="match status" value="1"/>
</dbReference>
<dbReference type="PROSITE" id="PS50262">
    <property type="entry name" value="G_PROTEIN_RECEP_F1_2"/>
    <property type="match status" value="1"/>
</dbReference>
<sequence length="366" mass="40837">MMSPDLDLNFSSNCNLYDHRPVARVLIPLVYSIICPVGLLGNALALHVVISSTTKINSITLYSANLAVSDILFCLSLPLRAVYYGLGFHWPMGEVLCKAIALLFYLNCYAGVNFMTCLAVDRFVALVFPARLAKLRKAKNVRFVCLAIWLLVLAQTLPLLTIGLTKTEPDSSITCMEYPNFEGVFKGLPYMLIVAVVLGFGIPVMTIIACYSILTHKLHQAAKSNQLTERSGKTKKARGVIAGVVFVFVVCFSPYHIDILQYMIRKLLYETDCKELQSFQISLHITVCLMNLNSCLDPFVYFFACKGYKQKVMRMMKWQVGTHFSSVKNSAESSGTGDVLGTRRNNRIIMNNVGEDQQICYQPSAT</sequence>
<accession>B0UXR0</accession>